<gene>
    <name type="primary">gadE</name>
    <name type="ordered locus">c4323</name>
</gene>
<organism>
    <name type="scientific">Escherichia coli O6:H1 (strain CFT073 / ATCC 700928 / UPEC)</name>
    <dbReference type="NCBI Taxonomy" id="199310"/>
    <lineage>
        <taxon>Bacteria</taxon>
        <taxon>Pseudomonadati</taxon>
        <taxon>Pseudomonadota</taxon>
        <taxon>Gammaproteobacteria</taxon>
        <taxon>Enterobacterales</taxon>
        <taxon>Enterobacteriaceae</taxon>
        <taxon>Escherichia</taxon>
    </lineage>
</organism>
<accession>P63205</accession>
<accession>P29688</accession>
<feature type="chain" id="PRO_0000184156" description="Transcriptional regulator GadE">
    <location>
        <begin position="1"/>
        <end position="175"/>
    </location>
</feature>
<feature type="domain" description="HTH luxR-type" evidence="2">
    <location>
        <begin position="109"/>
        <end position="174"/>
    </location>
</feature>
<feature type="DNA-binding region" description="H-T-H motif" evidence="2">
    <location>
        <begin position="133"/>
        <end position="152"/>
    </location>
</feature>
<keyword id="KW-0010">Activator</keyword>
<keyword id="KW-0238">DNA-binding</keyword>
<keyword id="KW-1185">Reference proteome</keyword>
<keyword id="KW-0804">Transcription</keyword>
<keyword id="KW-0805">Transcription regulation</keyword>
<dbReference type="EMBL" id="AE014075">
    <property type="protein sequence ID" value="AAN82759.1"/>
    <property type="status" value="ALT_INIT"/>
    <property type="molecule type" value="Genomic_DNA"/>
</dbReference>
<dbReference type="RefSeq" id="WP_000576690.1">
    <property type="nucleotide sequence ID" value="NZ_CP051263.1"/>
</dbReference>
<dbReference type="SMR" id="P63205"/>
<dbReference type="STRING" id="199310.c4323"/>
<dbReference type="GeneID" id="93778473"/>
<dbReference type="KEGG" id="ecc:c4323"/>
<dbReference type="eggNOG" id="COG2771">
    <property type="taxonomic scope" value="Bacteria"/>
</dbReference>
<dbReference type="HOGENOM" id="CLU_1522892_0_0_6"/>
<dbReference type="Proteomes" id="UP000001410">
    <property type="component" value="Chromosome"/>
</dbReference>
<dbReference type="GO" id="GO:0003677">
    <property type="term" value="F:DNA binding"/>
    <property type="evidence" value="ECO:0007669"/>
    <property type="project" value="UniProtKB-KW"/>
</dbReference>
<dbReference type="GO" id="GO:0006355">
    <property type="term" value="P:regulation of DNA-templated transcription"/>
    <property type="evidence" value="ECO:0007669"/>
    <property type="project" value="InterPro"/>
</dbReference>
<dbReference type="Gene3D" id="1.10.10.10">
    <property type="entry name" value="Winged helix-like DNA-binding domain superfamily/Winged helix DNA-binding domain"/>
    <property type="match status" value="1"/>
</dbReference>
<dbReference type="InterPro" id="IPR016032">
    <property type="entry name" value="Sig_transdc_resp-reg_C-effctor"/>
</dbReference>
<dbReference type="InterPro" id="IPR000792">
    <property type="entry name" value="Tscrpt_reg_LuxR_C"/>
</dbReference>
<dbReference type="InterPro" id="IPR036388">
    <property type="entry name" value="WH-like_DNA-bd_sf"/>
</dbReference>
<dbReference type="Pfam" id="PF00196">
    <property type="entry name" value="GerE"/>
    <property type="match status" value="1"/>
</dbReference>
<dbReference type="SUPFAM" id="SSF46894">
    <property type="entry name" value="C-terminal effector domain of the bipartite response regulators"/>
    <property type="match status" value="1"/>
</dbReference>
<dbReference type="PROSITE" id="PS50043">
    <property type="entry name" value="HTH_LUXR_2"/>
    <property type="match status" value="1"/>
</dbReference>
<reference key="1">
    <citation type="journal article" date="2002" name="Proc. Natl. Acad. Sci. U.S.A.">
        <title>Extensive mosaic structure revealed by the complete genome sequence of uropathogenic Escherichia coli.</title>
        <authorList>
            <person name="Welch R.A."/>
            <person name="Burland V."/>
            <person name="Plunkett G. III"/>
            <person name="Redford P."/>
            <person name="Roesch P."/>
            <person name="Rasko D."/>
            <person name="Buckles E.L."/>
            <person name="Liou S.-R."/>
            <person name="Boutin A."/>
            <person name="Hackett J."/>
            <person name="Stroud D."/>
            <person name="Mayhew G.F."/>
            <person name="Rose D.J."/>
            <person name="Zhou S."/>
            <person name="Schwartz D.C."/>
            <person name="Perna N.T."/>
            <person name="Mobley H.L.T."/>
            <person name="Donnenberg M.S."/>
            <person name="Blattner F.R."/>
        </authorList>
    </citation>
    <scope>NUCLEOTIDE SEQUENCE [LARGE SCALE GENOMIC DNA]</scope>
    <source>
        <strain>CFT073 / ATCC 700928 / UPEC</strain>
    </source>
</reference>
<comment type="function">
    <text evidence="1">Regulates the expression of several genes involved in acid resistance. Required for the expression of gadA and gadBC, among others, regardless of media or growth conditions. Binds directly to the 20 bp GAD box found in the control regions of both loci (By similarity).</text>
</comment>
<comment type="induction">
    <text evidence="1">By acidic conditions. Could be induced by EvgA via the induction of YdeO (By similarity).</text>
</comment>
<comment type="sequence caution" evidence="3">
    <conflict type="erroneous initiation">
        <sequence resource="EMBL-CDS" id="AAN82759"/>
    </conflict>
</comment>
<name>GADE_ECOL6</name>
<proteinExistence type="inferred from homology"/>
<protein>
    <recommendedName>
        <fullName>Transcriptional regulator GadE</fullName>
    </recommendedName>
</protein>
<evidence type="ECO:0000250" key="1"/>
<evidence type="ECO:0000255" key="2">
    <source>
        <dbReference type="PROSITE-ProRule" id="PRU00411"/>
    </source>
</evidence>
<evidence type="ECO:0000305" key="3"/>
<sequence length="175" mass="20599">MIFLMTKDSFLLQGFWQLKDNHEMIKINSLSEIKKVGNKPFKVIIDTYHNHILDEEAIKFLEKLDAERIIVLAPYHISKLKAKAPIYFVSRKESIKNLLEITYGKHLPHKNSQLCFSHNQFKIMQLILKNKNESNITSTLNISQQTLKIQKFNIMYKLKLRRMSDIVTLGITSYF</sequence>